<keyword id="KW-0249">Electron transport</keyword>
<keyword id="KW-0472">Membrane</keyword>
<keyword id="KW-0602">Photosynthesis</keyword>
<keyword id="KW-1185">Reference proteome</keyword>
<keyword id="KW-0793">Thylakoid</keyword>
<keyword id="KW-0812">Transmembrane</keyword>
<keyword id="KW-1133">Transmembrane helix</keyword>
<keyword id="KW-0813">Transport</keyword>
<organism>
    <name type="scientific">Synechococcus elongatus (strain ATCC 33912 / PCC 7942 / FACHB-805)</name>
    <name type="common">Anacystis nidulans R2</name>
    <dbReference type="NCBI Taxonomy" id="1140"/>
    <lineage>
        <taxon>Bacteria</taxon>
        <taxon>Bacillati</taxon>
        <taxon>Cyanobacteriota</taxon>
        <taxon>Cyanophyceae</taxon>
        <taxon>Synechococcales</taxon>
        <taxon>Synechococcaceae</taxon>
        <taxon>Synechococcus</taxon>
    </lineage>
</organism>
<comment type="function">
    <text evidence="1">Component of the cytochrome b6-f complex, which mediates electron transfer between photosystem II (PSII) and photosystem I (PSI), cyclic electron flow around PSI, and state transitions.</text>
</comment>
<comment type="subunit">
    <text evidence="1">The 4 large subunits of the cytochrome b6-f complex are cytochrome b6, subunit IV (17 kDa polypeptide, PetD), cytochrome f and the Rieske protein, while the 4 small subunits are PetG, PetL, PetM and PetN. The complex functions as a dimer.</text>
</comment>
<comment type="subcellular location">
    <subcellularLocation>
        <location evidence="1">Cellular thylakoid membrane</location>
        <topology evidence="1">Single-pass membrane protein</topology>
    </subcellularLocation>
</comment>
<comment type="similarity">
    <text evidence="1">Belongs to the PetM family.</text>
</comment>
<dbReference type="EMBL" id="CP000100">
    <property type="protein sequence ID" value="ABB58456.1"/>
    <property type="molecule type" value="Genomic_DNA"/>
</dbReference>
<dbReference type="RefSeq" id="WP_011243990.1">
    <property type="nucleotide sequence ID" value="NZ_JACJTX010000001.1"/>
</dbReference>
<dbReference type="SMR" id="Q31KG3"/>
<dbReference type="STRING" id="1140.Synpcc7942_2426"/>
<dbReference type="PaxDb" id="1140-Synpcc7942_2426"/>
<dbReference type="GeneID" id="72431315"/>
<dbReference type="KEGG" id="syf:Synpcc7942_2426"/>
<dbReference type="HOGENOM" id="CLU_216743_1_0_3"/>
<dbReference type="OrthoDB" id="468305at2"/>
<dbReference type="BioCyc" id="MetaCyc:SYNPCC7942_2426-MONOMER"/>
<dbReference type="BioCyc" id="SYNEL:SYNPCC7942_2426-MONOMER"/>
<dbReference type="Proteomes" id="UP000889800">
    <property type="component" value="Chromosome"/>
</dbReference>
<dbReference type="GO" id="GO:0009512">
    <property type="term" value="C:cytochrome b6f complex"/>
    <property type="evidence" value="ECO:0007669"/>
    <property type="project" value="InterPro"/>
</dbReference>
<dbReference type="GO" id="GO:0031676">
    <property type="term" value="C:plasma membrane-derived thylakoid membrane"/>
    <property type="evidence" value="ECO:0007669"/>
    <property type="project" value="UniProtKB-SubCell"/>
</dbReference>
<dbReference type="GO" id="GO:0009055">
    <property type="term" value="F:electron transfer activity"/>
    <property type="evidence" value="ECO:0007669"/>
    <property type="project" value="UniProtKB-UniRule"/>
</dbReference>
<dbReference type="GO" id="GO:0015979">
    <property type="term" value="P:photosynthesis"/>
    <property type="evidence" value="ECO:0007669"/>
    <property type="project" value="UniProtKB-KW"/>
</dbReference>
<dbReference type="HAMAP" id="MF_00396">
    <property type="entry name" value="Cytb6_f_PetM"/>
    <property type="match status" value="1"/>
</dbReference>
<dbReference type="InterPro" id="IPR012595">
    <property type="entry name" value="PetM_cyt_b6/f_cplx_su7"/>
</dbReference>
<dbReference type="NCBIfam" id="NF008826">
    <property type="entry name" value="PRK11876.1-2"/>
    <property type="match status" value="1"/>
</dbReference>
<dbReference type="Pfam" id="PF08041">
    <property type="entry name" value="PetM"/>
    <property type="match status" value="1"/>
</dbReference>
<dbReference type="SUPFAM" id="SSF103441">
    <property type="entry name" value="PetM subunit of the cytochrome b6f complex"/>
    <property type="match status" value="1"/>
</dbReference>
<feature type="chain" id="PRO_0000233234" description="Cytochrome b6-f complex subunit 7">
    <location>
        <begin position="1"/>
        <end position="37"/>
    </location>
</feature>
<feature type="transmembrane region" description="Helical" evidence="1">
    <location>
        <begin position="5"/>
        <end position="25"/>
    </location>
</feature>
<accession>Q31KG3</accession>
<evidence type="ECO:0000255" key="1">
    <source>
        <dbReference type="HAMAP-Rule" id="MF_00396"/>
    </source>
</evidence>
<gene>
    <name evidence="1" type="primary">petM</name>
    <name type="ordered locus">Synpcc7942_2426</name>
</gene>
<sequence>MAGEIFGTAFLFIVLVPVGLALGAFLLKVQGVQKAEK</sequence>
<reference key="1">
    <citation type="submission" date="2005-08" db="EMBL/GenBank/DDBJ databases">
        <title>Complete sequence of chromosome 1 of Synechococcus elongatus PCC 7942.</title>
        <authorList>
            <consortium name="US DOE Joint Genome Institute"/>
            <person name="Copeland A."/>
            <person name="Lucas S."/>
            <person name="Lapidus A."/>
            <person name="Barry K."/>
            <person name="Detter J.C."/>
            <person name="Glavina T."/>
            <person name="Hammon N."/>
            <person name="Israni S."/>
            <person name="Pitluck S."/>
            <person name="Schmutz J."/>
            <person name="Larimer F."/>
            <person name="Land M."/>
            <person name="Kyrpides N."/>
            <person name="Lykidis A."/>
            <person name="Golden S."/>
            <person name="Richardson P."/>
        </authorList>
    </citation>
    <scope>NUCLEOTIDE SEQUENCE [LARGE SCALE GENOMIC DNA]</scope>
    <source>
        <strain>ATCC 33912 / PCC 7942 / FACHB-805</strain>
    </source>
</reference>
<proteinExistence type="inferred from homology"/>
<protein>
    <recommendedName>
        <fullName evidence="1">Cytochrome b6-f complex subunit 7</fullName>
    </recommendedName>
    <alternativeName>
        <fullName evidence="1">Cytochrome b6-f complex subunit PetM</fullName>
    </alternativeName>
    <alternativeName>
        <fullName evidence="1">Cytochrome b6-f complex subunit VII</fullName>
    </alternativeName>
</protein>
<name>PETM_SYNE7</name>